<accession>Q0A7J2</accession>
<name>LPXB_ALKEH</name>
<protein>
    <recommendedName>
        <fullName evidence="1">Lipid-A-disaccharide synthase</fullName>
        <ecNumber evidence="1">2.4.1.182</ecNumber>
    </recommendedName>
</protein>
<organism>
    <name type="scientific">Alkalilimnicola ehrlichii (strain ATCC BAA-1101 / DSM 17681 / MLHE-1)</name>
    <dbReference type="NCBI Taxonomy" id="187272"/>
    <lineage>
        <taxon>Bacteria</taxon>
        <taxon>Pseudomonadati</taxon>
        <taxon>Pseudomonadota</taxon>
        <taxon>Gammaproteobacteria</taxon>
        <taxon>Chromatiales</taxon>
        <taxon>Ectothiorhodospiraceae</taxon>
        <taxon>Alkalilimnicola</taxon>
    </lineage>
</organism>
<keyword id="KW-0328">Glycosyltransferase</keyword>
<keyword id="KW-0441">Lipid A biosynthesis</keyword>
<keyword id="KW-0444">Lipid biosynthesis</keyword>
<keyword id="KW-0443">Lipid metabolism</keyword>
<keyword id="KW-1185">Reference proteome</keyword>
<keyword id="KW-0808">Transferase</keyword>
<proteinExistence type="inferred from homology"/>
<gene>
    <name evidence="1" type="primary">lpxB</name>
    <name type="ordered locus">Mlg_1851</name>
</gene>
<reference key="1">
    <citation type="submission" date="2006-08" db="EMBL/GenBank/DDBJ databases">
        <title>Complete sequence of Alkalilimnicola ehrilichei MLHE-1.</title>
        <authorList>
            <person name="Copeland A."/>
            <person name="Lucas S."/>
            <person name="Lapidus A."/>
            <person name="Barry K."/>
            <person name="Detter J.C."/>
            <person name="Glavina del Rio T."/>
            <person name="Hammon N."/>
            <person name="Israni S."/>
            <person name="Dalin E."/>
            <person name="Tice H."/>
            <person name="Pitluck S."/>
            <person name="Sims D."/>
            <person name="Brettin T."/>
            <person name="Bruce D."/>
            <person name="Han C."/>
            <person name="Tapia R."/>
            <person name="Gilna P."/>
            <person name="Schmutz J."/>
            <person name="Larimer F."/>
            <person name="Land M."/>
            <person name="Hauser L."/>
            <person name="Kyrpides N."/>
            <person name="Mikhailova N."/>
            <person name="Oremland R.S."/>
            <person name="Hoeft S.E."/>
            <person name="Switzer-Blum J."/>
            <person name="Kulp T."/>
            <person name="King G."/>
            <person name="Tabita R."/>
            <person name="Witte B."/>
            <person name="Santini J.M."/>
            <person name="Basu P."/>
            <person name="Hollibaugh J.T."/>
            <person name="Xie G."/>
            <person name="Stolz J.F."/>
            <person name="Richardson P."/>
        </authorList>
    </citation>
    <scope>NUCLEOTIDE SEQUENCE [LARGE SCALE GENOMIC DNA]</scope>
    <source>
        <strain>ATCC BAA-1101 / DSM 17681 / MLHE-1</strain>
    </source>
</reference>
<comment type="function">
    <text evidence="1">Condensation of UDP-2,3-diacylglucosamine and 2,3-diacylglucosamine-1-phosphate to form lipid A disaccharide, a precursor of lipid A, a phosphorylated glycolipid that anchors the lipopolysaccharide to the outer membrane of the cell.</text>
</comment>
<comment type="catalytic activity">
    <reaction evidence="1">
        <text>a lipid X + a UDP-2-N,3-O-bis[(3R)-3-hydroxyacyl]-alpha-D-glucosamine = a lipid A disaccharide + UDP + H(+)</text>
        <dbReference type="Rhea" id="RHEA:67828"/>
        <dbReference type="ChEBI" id="CHEBI:15378"/>
        <dbReference type="ChEBI" id="CHEBI:58223"/>
        <dbReference type="ChEBI" id="CHEBI:137748"/>
        <dbReference type="ChEBI" id="CHEBI:176338"/>
        <dbReference type="ChEBI" id="CHEBI:176343"/>
        <dbReference type="EC" id="2.4.1.182"/>
    </reaction>
</comment>
<comment type="pathway">
    <text evidence="1">Bacterial outer membrane biogenesis; LPS lipid A biosynthesis.</text>
</comment>
<comment type="similarity">
    <text evidence="1">Belongs to the LpxB family.</text>
</comment>
<feature type="chain" id="PRO_1000049383" description="Lipid-A-disaccharide synthase">
    <location>
        <begin position="1"/>
        <end position="382"/>
    </location>
</feature>
<dbReference type="EC" id="2.4.1.182" evidence="1"/>
<dbReference type="EMBL" id="CP000453">
    <property type="protein sequence ID" value="ABI57195.1"/>
    <property type="molecule type" value="Genomic_DNA"/>
</dbReference>
<dbReference type="RefSeq" id="WP_011629589.1">
    <property type="nucleotide sequence ID" value="NC_008340.1"/>
</dbReference>
<dbReference type="SMR" id="Q0A7J2"/>
<dbReference type="CAZy" id="GT19">
    <property type="family name" value="Glycosyltransferase Family 19"/>
</dbReference>
<dbReference type="KEGG" id="aeh:Mlg_1851"/>
<dbReference type="eggNOG" id="COG0763">
    <property type="taxonomic scope" value="Bacteria"/>
</dbReference>
<dbReference type="HOGENOM" id="CLU_036577_3_0_6"/>
<dbReference type="OrthoDB" id="9801642at2"/>
<dbReference type="UniPathway" id="UPA00973"/>
<dbReference type="Proteomes" id="UP000001962">
    <property type="component" value="Chromosome"/>
</dbReference>
<dbReference type="GO" id="GO:0016020">
    <property type="term" value="C:membrane"/>
    <property type="evidence" value="ECO:0007669"/>
    <property type="project" value="GOC"/>
</dbReference>
<dbReference type="GO" id="GO:0008915">
    <property type="term" value="F:lipid-A-disaccharide synthase activity"/>
    <property type="evidence" value="ECO:0007669"/>
    <property type="project" value="UniProtKB-UniRule"/>
</dbReference>
<dbReference type="GO" id="GO:0005543">
    <property type="term" value="F:phospholipid binding"/>
    <property type="evidence" value="ECO:0007669"/>
    <property type="project" value="TreeGrafter"/>
</dbReference>
<dbReference type="GO" id="GO:0009245">
    <property type="term" value="P:lipid A biosynthetic process"/>
    <property type="evidence" value="ECO:0007669"/>
    <property type="project" value="UniProtKB-UniRule"/>
</dbReference>
<dbReference type="CDD" id="cd01635">
    <property type="entry name" value="Glycosyltransferase_GTB-type"/>
    <property type="match status" value="1"/>
</dbReference>
<dbReference type="Gene3D" id="3.40.50.2000">
    <property type="entry name" value="Glycogen Phosphorylase B"/>
    <property type="match status" value="1"/>
</dbReference>
<dbReference type="HAMAP" id="MF_00392">
    <property type="entry name" value="LpxB"/>
    <property type="match status" value="1"/>
</dbReference>
<dbReference type="InterPro" id="IPR003835">
    <property type="entry name" value="Glyco_trans_19"/>
</dbReference>
<dbReference type="NCBIfam" id="TIGR00215">
    <property type="entry name" value="lpxB"/>
    <property type="match status" value="1"/>
</dbReference>
<dbReference type="PANTHER" id="PTHR30372">
    <property type="entry name" value="LIPID-A-DISACCHARIDE SYNTHASE"/>
    <property type="match status" value="1"/>
</dbReference>
<dbReference type="PANTHER" id="PTHR30372:SF4">
    <property type="entry name" value="LIPID-A-DISACCHARIDE SYNTHASE, MITOCHONDRIAL-RELATED"/>
    <property type="match status" value="1"/>
</dbReference>
<dbReference type="Pfam" id="PF02684">
    <property type="entry name" value="LpxB"/>
    <property type="match status" value="1"/>
</dbReference>
<dbReference type="SUPFAM" id="SSF53756">
    <property type="entry name" value="UDP-Glycosyltransferase/glycogen phosphorylase"/>
    <property type="match status" value="1"/>
</dbReference>
<evidence type="ECO:0000255" key="1">
    <source>
        <dbReference type="HAMAP-Rule" id="MF_00392"/>
    </source>
</evidence>
<sequence>MRVALVAGEHSGDRLGAGLIRAIRARCPEAEFDGVGGPLMQAEGLRSHYPMEALSVMGLVEVLRHLPRLLRIRRDLVARYRTDPPDVFVGIDLPDFNLSIERRLKAVGVPTVHYVSPQVWAWRQGRVRTIGRSVDRILALYPFEAEFYRRHGVPVDFVGHPAADRFPLQPDAGAARAALGLVDDGGGPWVALLPGSRLGEVQRHAELYARTVARLRERQPDVRFIAPLAWPGLRAVFYEALVQQGVSDAVQLFEGRADEVMAAADVVLTASGTATLEAMLLKRPMVVAYRLAPLTFWLMKRLVRVSHVSQPNLLAGEGLVEEYLQDAATPDNLAYALYRLLNDEPRSAYLRARFAELHGTLRRGADGQAAAAVLAAAGGNGS</sequence>